<feature type="chain" id="PRO_0000118614" description="NAD(P)H-quinone oxidoreductase subunit H">
    <location>
        <begin position="1"/>
        <end position="394"/>
    </location>
</feature>
<accession>Q8YRT8</accession>
<proteinExistence type="inferred from homology"/>
<name>NDHH_NOSS1</name>
<evidence type="ECO:0000255" key="1">
    <source>
        <dbReference type="HAMAP-Rule" id="MF_01358"/>
    </source>
</evidence>
<protein>
    <recommendedName>
        <fullName evidence="1">NAD(P)H-quinone oxidoreductase subunit H</fullName>
        <ecNumber evidence="1">7.1.1.-</ecNumber>
    </recommendedName>
    <alternativeName>
        <fullName>NAD(P)H dehydrogenase subunit H</fullName>
    </alternativeName>
    <alternativeName>
        <fullName evidence="1">NADH-plastoquinone oxidoreductase subunit H</fullName>
    </alternativeName>
    <alternativeName>
        <fullName evidence="1">NDH-1 subunit H</fullName>
        <shortName evidence="1">NDH-H</shortName>
    </alternativeName>
</protein>
<comment type="function">
    <text evidence="1">NDH-1 shuttles electrons from an unknown electron donor, via FMN and iron-sulfur (Fe-S) centers, to quinones in the respiratory and/or the photosynthetic chain. The immediate electron acceptor for the enzyme in this species is believed to be plastoquinone. Couples the redox reaction to proton translocation, and thus conserves the redox energy in a proton gradient. Cyanobacterial NDH-1 also plays a role in inorganic carbon-concentration.</text>
</comment>
<comment type="catalytic activity">
    <reaction evidence="1">
        <text>a plastoquinone + NADH + (n+1) H(+)(in) = a plastoquinol + NAD(+) + n H(+)(out)</text>
        <dbReference type="Rhea" id="RHEA:42608"/>
        <dbReference type="Rhea" id="RHEA-COMP:9561"/>
        <dbReference type="Rhea" id="RHEA-COMP:9562"/>
        <dbReference type="ChEBI" id="CHEBI:15378"/>
        <dbReference type="ChEBI" id="CHEBI:17757"/>
        <dbReference type="ChEBI" id="CHEBI:57540"/>
        <dbReference type="ChEBI" id="CHEBI:57945"/>
        <dbReference type="ChEBI" id="CHEBI:62192"/>
    </reaction>
</comment>
<comment type="catalytic activity">
    <reaction evidence="1">
        <text>a plastoquinone + NADPH + (n+1) H(+)(in) = a plastoquinol + NADP(+) + n H(+)(out)</text>
        <dbReference type="Rhea" id="RHEA:42612"/>
        <dbReference type="Rhea" id="RHEA-COMP:9561"/>
        <dbReference type="Rhea" id="RHEA-COMP:9562"/>
        <dbReference type="ChEBI" id="CHEBI:15378"/>
        <dbReference type="ChEBI" id="CHEBI:17757"/>
        <dbReference type="ChEBI" id="CHEBI:57783"/>
        <dbReference type="ChEBI" id="CHEBI:58349"/>
        <dbReference type="ChEBI" id="CHEBI:62192"/>
    </reaction>
</comment>
<comment type="subunit">
    <text evidence="1">NDH-1 can be composed of about 15 different subunits; different subcomplexes with different compositions have been identified which probably have different functions.</text>
</comment>
<comment type="subcellular location">
    <subcellularLocation>
        <location evidence="1">Cellular thylakoid membrane</location>
        <topology evidence="1">Peripheral membrane protein</topology>
        <orientation evidence="1">Cytoplasmic side</orientation>
    </subcellularLocation>
</comment>
<comment type="similarity">
    <text evidence="1">Belongs to the complex I 49 kDa subunit family.</text>
</comment>
<dbReference type="EC" id="7.1.1.-" evidence="1"/>
<dbReference type="EMBL" id="BA000019">
    <property type="protein sequence ID" value="BAB75054.1"/>
    <property type="molecule type" value="Genomic_DNA"/>
</dbReference>
<dbReference type="PIR" id="AD2225">
    <property type="entry name" value="AD2225"/>
</dbReference>
<dbReference type="RefSeq" id="WP_010997506.1">
    <property type="nucleotide sequence ID" value="NZ_RSCN01000038.1"/>
</dbReference>
<dbReference type="SMR" id="Q8YRT8"/>
<dbReference type="STRING" id="103690.gene:10495393"/>
<dbReference type="KEGG" id="ana:alr3355"/>
<dbReference type="eggNOG" id="COG0649">
    <property type="taxonomic scope" value="Bacteria"/>
</dbReference>
<dbReference type="OrthoDB" id="9801496at2"/>
<dbReference type="Proteomes" id="UP000002483">
    <property type="component" value="Chromosome"/>
</dbReference>
<dbReference type="GO" id="GO:0031676">
    <property type="term" value="C:plasma membrane-derived thylakoid membrane"/>
    <property type="evidence" value="ECO:0007669"/>
    <property type="project" value="UniProtKB-SubCell"/>
</dbReference>
<dbReference type="GO" id="GO:0051287">
    <property type="term" value="F:NAD binding"/>
    <property type="evidence" value="ECO:0007669"/>
    <property type="project" value="InterPro"/>
</dbReference>
<dbReference type="GO" id="GO:0016655">
    <property type="term" value="F:oxidoreductase activity, acting on NAD(P)H, quinone or similar compound as acceptor"/>
    <property type="evidence" value="ECO:0007669"/>
    <property type="project" value="UniProtKB-UniRule"/>
</dbReference>
<dbReference type="GO" id="GO:0048038">
    <property type="term" value="F:quinone binding"/>
    <property type="evidence" value="ECO:0007669"/>
    <property type="project" value="UniProtKB-KW"/>
</dbReference>
<dbReference type="GO" id="GO:0019684">
    <property type="term" value="P:photosynthesis, light reaction"/>
    <property type="evidence" value="ECO:0007669"/>
    <property type="project" value="UniProtKB-UniRule"/>
</dbReference>
<dbReference type="Gene3D" id="1.10.645.10">
    <property type="entry name" value="Cytochrome-c3 Hydrogenase, chain B"/>
    <property type="match status" value="1"/>
</dbReference>
<dbReference type="HAMAP" id="MF_01358">
    <property type="entry name" value="NDH1_NuoD"/>
    <property type="match status" value="1"/>
</dbReference>
<dbReference type="InterPro" id="IPR001135">
    <property type="entry name" value="NADH_Q_OxRdtase_suD"/>
</dbReference>
<dbReference type="InterPro" id="IPR014029">
    <property type="entry name" value="NADH_UbQ_OxRdtase_49kDa_CS"/>
</dbReference>
<dbReference type="InterPro" id="IPR022885">
    <property type="entry name" value="NDH1_su_D/H"/>
</dbReference>
<dbReference type="InterPro" id="IPR029014">
    <property type="entry name" value="NiFe-Hase_large"/>
</dbReference>
<dbReference type="NCBIfam" id="TIGR01962">
    <property type="entry name" value="NuoD"/>
    <property type="match status" value="1"/>
</dbReference>
<dbReference type="NCBIfam" id="NF004739">
    <property type="entry name" value="PRK06075.1"/>
    <property type="match status" value="1"/>
</dbReference>
<dbReference type="NCBIfam" id="NF005649">
    <property type="entry name" value="PRK07415.1"/>
    <property type="match status" value="1"/>
</dbReference>
<dbReference type="PANTHER" id="PTHR11993:SF10">
    <property type="entry name" value="NADH DEHYDROGENASE [UBIQUINONE] IRON-SULFUR PROTEIN 2, MITOCHONDRIAL"/>
    <property type="match status" value="1"/>
</dbReference>
<dbReference type="PANTHER" id="PTHR11993">
    <property type="entry name" value="NADH-UBIQUINONE OXIDOREDUCTASE 49 KDA SUBUNIT"/>
    <property type="match status" value="1"/>
</dbReference>
<dbReference type="Pfam" id="PF00346">
    <property type="entry name" value="Complex1_49kDa"/>
    <property type="match status" value="1"/>
</dbReference>
<dbReference type="SUPFAM" id="SSF56762">
    <property type="entry name" value="HydB/Nqo4-like"/>
    <property type="match status" value="1"/>
</dbReference>
<dbReference type="PROSITE" id="PS00535">
    <property type="entry name" value="COMPLEX1_49K"/>
    <property type="match status" value="1"/>
</dbReference>
<keyword id="KW-0472">Membrane</keyword>
<keyword id="KW-0520">NAD</keyword>
<keyword id="KW-0521">NADP</keyword>
<keyword id="KW-0618">Plastoquinone</keyword>
<keyword id="KW-0874">Quinone</keyword>
<keyword id="KW-1185">Reference proteome</keyword>
<keyword id="KW-0793">Thylakoid</keyword>
<keyword id="KW-1278">Translocase</keyword>
<keyword id="KW-0813">Transport</keyword>
<gene>
    <name evidence="1" type="primary">ndhH</name>
    <name type="ordered locus">alr3355</name>
</gene>
<reference key="1">
    <citation type="journal article" date="2001" name="DNA Res.">
        <title>Complete genomic sequence of the filamentous nitrogen-fixing cyanobacterium Anabaena sp. strain PCC 7120.</title>
        <authorList>
            <person name="Kaneko T."/>
            <person name="Nakamura Y."/>
            <person name="Wolk C.P."/>
            <person name="Kuritz T."/>
            <person name="Sasamoto S."/>
            <person name="Watanabe A."/>
            <person name="Iriguchi M."/>
            <person name="Ishikawa A."/>
            <person name="Kawashima K."/>
            <person name="Kimura T."/>
            <person name="Kishida Y."/>
            <person name="Kohara M."/>
            <person name="Matsumoto M."/>
            <person name="Matsuno A."/>
            <person name="Muraki A."/>
            <person name="Nakazaki N."/>
            <person name="Shimpo S."/>
            <person name="Sugimoto M."/>
            <person name="Takazawa M."/>
            <person name="Yamada M."/>
            <person name="Yasuda M."/>
            <person name="Tabata S."/>
        </authorList>
    </citation>
    <scope>NUCLEOTIDE SEQUENCE [LARGE SCALE GENOMIC DNA]</scope>
    <source>
        <strain>PCC 7120 / SAG 25.82 / UTEX 2576</strain>
    </source>
</reference>
<organism>
    <name type="scientific">Nostoc sp. (strain PCC 7120 / SAG 25.82 / UTEX 2576)</name>
    <dbReference type="NCBI Taxonomy" id="103690"/>
    <lineage>
        <taxon>Bacteria</taxon>
        <taxon>Bacillati</taxon>
        <taxon>Cyanobacteriota</taxon>
        <taxon>Cyanophyceae</taxon>
        <taxon>Nostocales</taxon>
        <taxon>Nostocaceae</taxon>
        <taxon>Nostoc</taxon>
    </lineage>
</organism>
<sequence length="394" mass="45216">MARIETRTEPMVLNMGPHHPSMHGVLRLIVTLDGEDVVDCEPVIGYLHRGMEKIAENRTTVMYVPYVSRWDYAAGMFNEAVTVNAPEKLAGVAVPKRASYIRVIMLELNRIANHLLWFGPFLADVGAQTPFFYQFREREMIYDLWEAATGYRMVNNNYFRVGGVAADLPYGWVDKCLEFCDYFLPVIDEYEKLVTNNPIFRRRIEGIGTISREEAINWGLSGPMLRASGVKWDLRKVDHYECYDDFDWDVQWETAGDCLARYTVRMREMRESVKIIKQAIKGLPGGPYENLEAKRLAAGKKSEWDAFDYQYIGKKVSPTFKMPKGEIYARVESGKGELGIYLIGDDNVFPWRWKIRPADFNNLQILPHLLRGMKVADVVVILGSIDVIMGSVDR</sequence>